<name>THSB_DESMO</name>
<protein>
    <recommendedName>
        <fullName>Thermosome subunit beta</fullName>
    </recommendedName>
    <alternativeName>
        <fullName>Chaperonin subunit beta</fullName>
    </alternativeName>
    <alternativeName>
        <fullName>Thermosome subunit 2</fullName>
    </alternativeName>
</protein>
<evidence type="ECO:0000250" key="1"/>
<evidence type="ECO:0000305" key="2"/>
<comment type="function">
    <text evidence="1">Molecular chaperone; binds unfolded polypeptides in vitro, and has a weak ATPase activity.</text>
</comment>
<comment type="subunit">
    <text evidence="1">Forms a Heterooligomeric complex of two stacked eight-membered rings.</text>
</comment>
<comment type="similarity">
    <text evidence="2">Belongs to the TCP-1 chaperonin family.</text>
</comment>
<reference key="1">
    <citation type="journal article" date="1999" name="Curr. Biol.">
        <title>Recurrent paralogy in the evolution of archaeal chaperonins.</title>
        <authorList>
            <person name="Archibald J.M."/>
            <person name="Logsdon J.M. Jr."/>
            <person name="Doolittle W.F."/>
        </authorList>
    </citation>
    <scope>NUCLEOTIDE SEQUENCE [GENOMIC DNA]</scope>
</reference>
<accession>Q9V2T3</accession>
<dbReference type="EMBL" id="AF149925">
    <property type="protein sequence ID" value="AAF03366.1"/>
    <property type="molecule type" value="Genomic_DNA"/>
</dbReference>
<dbReference type="SMR" id="Q9V2T3"/>
<dbReference type="GO" id="GO:0005524">
    <property type="term" value="F:ATP binding"/>
    <property type="evidence" value="ECO:0007669"/>
    <property type="project" value="UniProtKB-KW"/>
</dbReference>
<dbReference type="GO" id="GO:0016887">
    <property type="term" value="F:ATP hydrolysis activity"/>
    <property type="evidence" value="ECO:0007669"/>
    <property type="project" value="InterPro"/>
</dbReference>
<dbReference type="GO" id="GO:0140662">
    <property type="term" value="F:ATP-dependent protein folding chaperone"/>
    <property type="evidence" value="ECO:0007669"/>
    <property type="project" value="InterPro"/>
</dbReference>
<dbReference type="GO" id="GO:0051082">
    <property type="term" value="F:unfolded protein binding"/>
    <property type="evidence" value="ECO:0007669"/>
    <property type="project" value="InterPro"/>
</dbReference>
<dbReference type="CDD" id="cd03343">
    <property type="entry name" value="cpn60"/>
    <property type="match status" value="1"/>
</dbReference>
<dbReference type="Gene3D" id="3.50.7.10">
    <property type="entry name" value="GroEL"/>
    <property type="match status" value="1"/>
</dbReference>
<dbReference type="Gene3D" id="1.10.560.10">
    <property type="entry name" value="GroEL-like equatorial domain"/>
    <property type="match status" value="1"/>
</dbReference>
<dbReference type="Gene3D" id="3.30.260.10">
    <property type="entry name" value="TCP-1-like chaperonin intermediate domain"/>
    <property type="match status" value="1"/>
</dbReference>
<dbReference type="InterPro" id="IPR017998">
    <property type="entry name" value="Chaperone_TCP-1"/>
</dbReference>
<dbReference type="InterPro" id="IPR002194">
    <property type="entry name" value="Chaperonin_TCP-1_CS"/>
</dbReference>
<dbReference type="InterPro" id="IPR002423">
    <property type="entry name" value="Cpn60/GroEL/TCP-1"/>
</dbReference>
<dbReference type="InterPro" id="IPR027409">
    <property type="entry name" value="GroEL-like_apical_dom_sf"/>
</dbReference>
<dbReference type="InterPro" id="IPR027413">
    <property type="entry name" value="GROEL-like_equatorial_sf"/>
</dbReference>
<dbReference type="InterPro" id="IPR027410">
    <property type="entry name" value="TCP-1-like_intermed_sf"/>
</dbReference>
<dbReference type="InterPro" id="IPR053374">
    <property type="entry name" value="TCP-1_chaperonin"/>
</dbReference>
<dbReference type="InterPro" id="IPR054827">
    <property type="entry name" value="thermosome_alpha"/>
</dbReference>
<dbReference type="InterPro" id="IPR012714">
    <property type="entry name" value="Thermosome_arc"/>
</dbReference>
<dbReference type="NCBIfam" id="NF041082">
    <property type="entry name" value="thermosome_alpha"/>
    <property type="match status" value="1"/>
</dbReference>
<dbReference type="NCBIfam" id="TIGR02339">
    <property type="entry name" value="thermosome_arch"/>
    <property type="match status" value="1"/>
</dbReference>
<dbReference type="NCBIfam" id="NF041083">
    <property type="entry name" value="thermosome_beta"/>
    <property type="match status" value="1"/>
</dbReference>
<dbReference type="PANTHER" id="PTHR11353">
    <property type="entry name" value="CHAPERONIN"/>
    <property type="match status" value="1"/>
</dbReference>
<dbReference type="Pfam" id="PF00118">
    <property type="entry name" value="Cpn60_TCP1"/>
    <property type="match status" value="1"/>
</dbReference>
<dbReference type="PRINTS" id="PR00304">
    <property type="entry name" value="TCOMPLEXTCP1"/>
</dbReference>
<dbReference type="SUPFAM" id="SSF52029">
    <property type="entry name" value="GroEL apical domain-like"/>
    <property type="match status" value="1"/>
</dbReference>
<dbReference type="SUPFAM" id="SSF48592">
    <property type="entry name" value="GroEL equatorial domain-like"/>
    <property type="match status" value="1"/>
</dbReference>
<dbReference type="SUPFAM" id="SSF54849">
    <property type="entry name" value="GroEL-intermediate domain like"/>
    <property type="match status" value="1"/>
</dbReference>
<dbReference type="PROSITE" id="PS00750">
    <property type="entry name" value="TCP1_1"/>
    <property type="match status" value="1"/>
</dbReference>
<dbReference type="PROSITE" id="PS00751">
    <property type="entry name" value="TCP1_2"/>
    <property type="match status" value="1"/>
</dbReference>
<dbReference type="PROSITE" id="PS00995">
    <property type="entry name" value="TCP1_3"/>
    <property type="match status" value="1"/>
</dbReference>
<organism>
    <name type="scientific">Desulfurococcus mucosus</name>
    <name type="common">Desulfurococcus mobilis</name>
    <dbReference type="NCBI Taxonomy" id="2275"/>
    <lineage>
        <taxon>Archaea</taxon>
        <taxon>Thermoproteota</taxon>
        <taxon>Thermoprotei</taxon>
        <taxon>Desulfurococcales</taxon>
        <taxon>Desulfurococcaceae</taxon>
        <taxon>Desulfurococcus</taxon>
    </lineage>
</organism>
<gene>
    <name type="primary">thsB</name>
</gene>
<feature type="chain" id="PRO_0000128383" description="Thermosome subunit beta">
    <location>
        <begin position="1" status="less than"/>
        <end position="502" status="greater than"/>
    </location>
</feature>
<feature type="non-terminal residue">
    <location>
        <position position="1"/>
    </location>
</feature>
<feature type="non-terminal residue">
    <location>
        <position position="502"/>
    </location>
</feature>
<keyword id="KW-0067">ATP-binding</keyword>
<keyword id="KW-0143">Chaperone</keyword>
<keyword id="KW-0547">Nucleotide-binding</keyword>
<sequence length="502" mass="54964">QRTTGRDALRTNILAARAISEMIKTTYGPKGMDKMLVDALGDVTITNDGATILDKAEIQHPAAKMLVQVAKSQDSEVGDGTKRAVILAGELLKYAEELLDKNIHPTVIISGYRMAMEEALKILDQMAEPIDLNNEELLRKVARTSLTSKAVHDAREFFADIAVKAVKQVVEKRGDKNYVDLDNIQIIKKYGGALLDSMLVYGIVLDKEVVHPGMPRRVENAKIVLLDAPLEIEKPEIDAEIRINDPEQLEKFLQQEEEILMKMVDKIASVGANVVVCQKGIDEVAQHFLAKKGILAVRRVKRSDLEKLERATGGRIVSNIEDLTPEDLGYAALVEERKVGEDKMVFIEGCKNPRSVSIVIRGGLERLVDEAERSIRDALSAVADALRDGKVIPGGGAAEIELAKHIRRLATRVGGKEQLAIEAFAKALEGLAVTLVENAGLDPIDMVMKLRAAHEREDGKYLSIDLATGDLVNMREKGVIEPVSILANAIKAGTEAATIIMR</sequence>
<proteinExistence type="inferred from homology"/>